<reference key="1">
    <citation type="submission" date="2008-07" db="EMBL/GenBank/DDBJ databases">
        <title>Complete sequence of Geobacter bemidjiensis BEM.</title>
        <authorList>
            <consortium name="US DOE Joint Genome Institute"/>
            <person name="Lucas S."/>
            <person name="Copeland A."/>
            <person name="Lapidus A."/>
            <person name="Glavina del Rio T."/>
            <person name="Dalin E."/>
            <person name="Tice H."/>
            <person name="Bruce D."/>
            <person name="Goodwin L."/>
            <person name="Pitluck S."/>
            <person name="Kiss H."/>
            <person name="Brettin T."/>
            <person name="Detter J.C."/>
            <person name="Han C."/>
            <person name="Kuske C.R."/>
            <person name="Schmutz J."/>
            <person name="Larimer F."/>
            <person name="Land M."/>
            <person name="Hauser L."/>
            <person name="Kyrpides N."/>
            <person name="Lykidis A."/>
            <person name="Lovley D."/>
            <person name="Richardson P."/>
        </authorList>
    </citation>
    <scope>NUCLEOTIDE SEQUENCE [LARGE SCALE GENOMIC DNA]</scope>
    <source>
        <strain>ATCC BAA-1014 / DSM 16622 / JCM 12645 / Bem</strain>
    </source>
</reference>
<sequence length="59" mass="6550">MSAELKITLVRSAIGQSEKMKGRLLGMGLTKREKTVTLQDTPEIRGMIAKVAHLVRVEE</sequence>
<proteinExistence type="inferred from homology"/>
<name>RL30_CITBB</name>
<dbReference type="EMBL" id="CP001124">
    <property type="protein sequence ID" value="ACH37972.1"/>
    <property type="molecule type" value="Genomic_DNA"/>
</dbReference>
<dbReference type="RefSeq" id="WP_012529384.1">
    <property type="nucleotide sequence ID" value="NC_011146.1"/>
</dbReference>
<dbReference type="SMR" id="B5EFR8"/>
<dbReference type="STRING" id="404380.Gbem_0951"/>
<dbReference type="KEGG" id="gbm:Gbem_0951"/>
<dbReference type="eggNOG" id="COG1841">
    <property type="taxonomic scope" value="Bacteria"/>
</dbReference>
<dbReference type="HOGENOM" id="CLU_131047_2_1_7"/>
<dbReference type="OrthoDB" id="9812790at2"/>
<dbReference type="Proteomes" id="UP000008825">
    <property type="component" value="Chromosome"/>
</dbReference>
<dbReference type="GO" id="GO:0022625">
    <property type="term" value="C:cytosolic large ribosomal subunit"/>
    <property type="evidence" value="ECO:0007669"/>
    <property type="project" value="TreeGrafter"/>
</dbReference>
<dbReference type="GO" id="GO:0003735">
    <property type="term" value="F:structural constituent of ribosome"/>
    <property type="evidence" value="ECO:0007669"/>
    <property type="project" value="InterPro"/>
</dbReference>
<dbReference type="GO" id="GO:0006412">
    <property type="term" value="P:translation"/>
    <property type="evidence" value="ECO:0007669"/>
    <property type="project" value="InterPro"/>
</dbReference>
<dbReference type="CDD" id="cd01658">
    <property type="entry name" value="Ribosomal_L30"/>
    <property type="match status" value="1"/>
</dbReference>
<dbReference type="Gene3D" id="3.30.1390.20">
    <property type="entry name" value="Ribosomal protein L30, ferredoxin-like fold domain"/>
    <property type="match status" value="1"/>
</dbReference>
<dbReference type="HAMAP" id="MF_01371_B">
    <property type="entry name" value="Ribosomal_uL30_B"/>
    <property type="match status" value="1"/>
</dbReference>
<dbReference type="InterPro" id="IPR036919">
    <property type="entry name" value="Ribo_uL30_ferredoxin-like_sf"/>
</dbReference>
<dbReference type="InterPro" id="IPR005996">
    <property type="entry name" value="Ribosomal_uL30_bac-type"/>
</dbReference>
<dbReference type="InterPro" id="IPR016082">
    <property type="entry name" value="Ribosomal_uL30_ferredoxin-like"/>
</dbReference>
<dbReference type="NCBIfam" id="TIGR01308">
    <property type="entry name" value="rpmD_bact"/>
    <property type="match status" value="1"/>
</dbReference>
<dbReference type="PANTHER" id="PTHR15892:SF2">
    <property type="entry name" value="LARGE RIBOSOMAL SUBUNIT PROTEIN UL30M"/>
    <property type="match status" value="1"/>
</dbReference>
<dbReference type="PANTHER" id="PTHR15892">
    <property type="entry name" value="MITOCHONDRIAL RIBOSOMAL PROTEIN L30"/>
    <property type="match status" value="1"/>
</dbReference>
<dbReference type="Pfam" id="PF00327">
    <property type="entry name" value="Ribosomal_L30"/>
    <property type="match status" value="1"/>
</dbReference>
<dbReference type="PIRSF" id="PIRSF002211">
    <property type="entry name" value="Ribosomal_L30_bac-type"/>
    <property type="match status" value="1"/>
</dbReference>
<dbReference type="SUPFAM" id="SSF55129">
    <property type="entry name" value="Ribosomal protein L30p/L7e"/>
    <property type="match status" value="1"/>
</dbReference>
<accession>B5EFR8</accession>
<evidence type="ECO:0000255" key="1">
    <source>
        <dbReference type="HAMAP-Rule" id="MF_01371"/>
    </source>
</evidence>
<evidence type="ECO:0000305" key="2"/>
<comment type="subunit">
    <text evidence="1">Part of the 50S ribosomal subunit.</text>
</comment>
<comment type="similarity">
    <text evidence="1">Belongs to the universal ribosomal protein uL30 family.</text>
</comment>
<organism>
    <name type="scientific">Citrifermentans bemidjiense (strain ATCC BAA-1014 / DSM 16622 / JCM 12645 / Bem)</name>
    <name type="common">Geobacter bemidjiensis</name>
    <dbReference type="NCBI Taxonomy" id="404380"/>
    <lineage>
        <taxon>Bacteria</taxon>
        <taxon>Pseudomonadati</taxon>
        <taxon>Thermodesulfobacteriota</taxon>
        <taxon>Desulfuromonadia</taxon>
        <taxon>Geobacterales</taxon>
        <taxon>Geobacteraceae</taxon>
        <taxon>Citrifermentans</taxon>
    </lineage>
</organism>
<keyword id="KW-1185">Reference proteome</keyword>
<keyword id="KW-0687">Ribonucleoprotein</keyword>
<keyword id="KW-0689">Ribosomal protein</keyword>
<gene>
    <name evidence="1" type="primary">rpmD</name>
    <name type="ordered locus">Gbem_0951</name>
</gene>
<feature type="chain" id="PRO_1000144688" description="Large ribosomal subunit protein uL30">
    <location>
        <begin position="1"/>
        <end position="59"/>
    </location>
</feature>
<protein>
    <recommendedName>
        <fullName evidence="1">Large ribosomal subunit protein uL30</fullName>
    </recommendedName>
    <alternativeName>
        <fullName evidence="2">50S ribosomal protein L30</fullName>
    </alternativeName>
</protein>